<accession>Q0CY06</accession>
<reference key="1">
    <citation type="submission" date="2005-09" db="EMBL/GenBank/DDBJ databases">
        <title>Annotation of the Aspergillus terreus NIH2624 genome.</title>
        <authorList>
            <person name="Birren B.W."/>
            <person name="Lander E.S."/>
            <person name="Galagan J.E."/>
            <person name="Nusbaum C."/>
            <person name="Devon K."/>
            <person name="Henn M."/>
            <person name="Ma L.-J."/>
            <person name="Jaffe D.B."/>
            <person name="Butler J."/>
            <person name="Alvarez P."/>
            <person name="Gnerre S."/>
            <person name="Grabherr M."/>
            <person name="Kleber M."/>
            <person name="Mauceli E.W."/>
            <person name="Brockman W."/>
            <person name="Rounsley S."/>
            <person name="Young S.K."/>
            <person name="LaButti K."/>
            <person name="Pushparaj V."/>
            <person name="DeCaprio D."/>
            <person name="Crawford M."/>
            <person name="Koehrsen M."/>
            <person name="Engels R."/>
            <person name="Montgomery P."/>
            <person name="Pearson M."/>
            <person name="Howarth C."/>
            <person name="Larson L."/>
            <person name="Luoma S."/>
            <person name="White J."/>
            <person name="Alvarado L."/>
            <person name="Kodira C.D."/>
            <person name="Zeng Q."/>
            <person name="Oleary S."/>
            <person name="Yandava C."/>
            <person name="Denning D.W."/>
            <person name="Nierman W.C."/>
            <person name="Milne T."/>
            <person name="Madden K."/>
        </authorList>
    </citation>
    <scope>NUCLEOTIDE SEQUENCE [LARGE SCALE GENOMIC DNA]</scope>
    <source>
        <strain>NIH 2624 / FGSC A1156</strain>
    </source>
</reference>
<gene>
    <name type="primary">arg2</name>
    <name type="ORF">ATEG_01428</name>
</gene>
<proteinExistence type="inferred from homology"/>
<organism>
    <name type="scientific">Aspergillus terreus (strain NIH 2624 / FGSC A1156)</name>
    <dbReference type="NCBI Taxonomy" id="341663"/>
    <lineage>
        <taxon>Eukaryota</taxon>
        <taxon>Fungi</taxon>
        <taxon>Dikarya</taxon>
        <taxon>Ascomycota</taxon>
        <taxon>Pezizomycotina</taxon>
        <taxon>Eurotiomycetes</taxon>
        <taxon>Eurotiomycetidae</taxon>
        <taxon>Eurotiales</taxon>
        <taxon>Aspergillaceae</taxon>
        <taxon>Aspergillus</taxon>
        <taxon>Aspergillus subgen. Circumdati</taxon>
    </lineage>
</organism>
<dbReference type="EC" id="2.3.1.1"/>
<dbReference type="EMBL" id="CH476595">
    <property type="protein sequence ID" value="EAU38185.1"/>
    <property type="molecule type" value="Genomic_DNA"/>
</dbReference>
<dbReference type="RefSeq" id="XP_001208793.1">
    <property type="nucleotide sequence ID" value="XM_001208793.1"/>
</dbReference>
<dbReference type="SMR" id="Q0CY06"/>
<dbReference type="STRING" id="341663.Q0CY06"/>
<dbReference type="EnsemblFungi" id="EAU38185">
    <property type="protein sequence ID" value="EAU38185"/>
    <property type="gene ID" value="ATEG_01428"/>
</dbReference>
<dbReference type="GeneID" id="4315748"/>
<dbReference type="VEuPathDB" id="FungiDB:ATEG_01428"/>
<dbReference type="eggNOG" id="KOG2436">
    <property type="taxonomic scope" value="Eukaryota"/>
</dbReference>
<dbReference type="HOGENOM" id="CLU_013088_0_0_1"/>
<dbReference type="OMA" id="NAMVRDC"/>
<dbReference type="OrthoDB" id="5585968at2759"/>
<dbReference type="UniPathway" id="UPA00068">
    <property type="reaction ID" value="UER00106"/>
</dbReference>
<dbReference type="Proteomes" id="UP000007963">
    <property type="component" value="Unassembled WGS sequence"/>
</dbReference>
<dbReference type="GO" id="GO:0005759">
    <property type="term" value="C:mitochondrial matrix"/>
    <property type="evidence" value="ECO:0007669"/>
    <property type="project" value="TreeGrafter"/>
</dbReference>
<dbReference type="GO" id="GO:0004042">
    <property type="term" value="F:L-glutamate N-acetyltransferase activity"/>
    <property type="evidence" value="ECO:0007669"/>
    <property type="project" value="InterPro"/>
</dbReference>
<dbReference type="GO" id="GO:0006526">
    <property type="term" value="P:L-arginine biosynthetic process"/>
    <property type="evidence" value="ECO:0007669"/>
    <property type="project" value="UniProtKB-UniPathway"/>
</dbReference>
<dbReference type="GO" id="GO:0006592">
    <property type="term" value="P:ornithine biosynthetic process"/>
    <property type="evidence" value="ECO:0007669"/>
    <property type="project" value="TreeGrafter"/>
</dbReference>
<dbReference type="FunFam" id="3.40.630.30:FF:000049">
    <property type="entry name" value="Amino-acid acetyltransferase, mitochondrial"/>
    <property type="match status" value="1"/>
</dbReference>
<dbReference type="Gene3D" id="3.40.630.30">
    <property type="match status" value="1"/>
</dbReference>
<dbReference type="InterPro" id="IPR011190">
    <property type="entry name" value="GlcNAc_Synth_fun"/>
</dbReference>
<dbReference type="InterPro" id="IPR006855">
    <property type="entry name" value="Vertebrate-like_GNAT_dom"/>
</dbReference>
<dbReference type="PANTHER" id="PTHR23342:SF4">
    <property type="entry name" value="AMINO-ACID ACETYLTRANSFERASE, MITOCHONDRIAL"/>
    <property type="match status" value="1"/>
</dbReference>
<dbReference type="PANTHER" id="PTHR23342">
    <property type="entry name" value="N-ACETYLGLUTAMATE SYNTHASE"/>
    <property type="match status" value="1"/>
</dbReference>
<dbReference type="Pfam" id="PF04768">
    <property type="entry name" value="NAT"/>
    <property type="match status" value="1"/>
</dbReference>
<dbReference type="PIRSF" id="PIRSF007892">
    <property type="entry name" value="NAGS_fungal"/>
    <property type="match status" value="1"/>
</dbReference>
<dbReference type="PROSITE" id="PS51731">
    <property type="entry name" value="GNAT_NAGS"/>
    <property type="match status" value="1"/>
</dbReference>
<feature type="transit peptide" description="Mitochondrion" evidence="2">
    <location>
        <begin position="1"/>
        <end status="unknown"/>
    </location>
</feature>
<feature type="chain" id="PRO_0000372554" description="Amino-acid acetyltransferase, mitochondrial">
    <location>
        <begin status="unknown"/>
        <end position="691"/>
    </location>
</feature>
<feature type="domain" description="N-acetyltransferase" evidence="3">
    <location>
        <begin position="512"/>
        <end position="681"/>
    </location>
</feature>
<feature type="region of interest" description="Disordered" evidence="4">
    <location>
        <begin position="1"/>
        <end position="29"/>
    </location>
</feature>
<feature type="region of interest" description="Disordered" evidence="4">
    <location>
        <begin position="65"/>
        <end position="95"/>
    </location>
</feature>
<feature type="compositionally biased region" description="Polar residues" evidence="4">
    <location>
        <begin position="1"/>
        <end position="27"/>
    </location>
</feature>
<feature type="compositionally biased region" description="Basic and acidic residues" evidence="4">
    <location>
        <begin position="75"/>
        <end position="87"/>
    </location>
</feature>
<name>NAGS_ASPTN</name>
<evidence type="ECO:0000250" key="1"/>
<evidence type="ECO:0000255" key="2"/>
<evidence type="ECO:0000255" key="3">
    <source>
        <dbReference type="PROSITE-ProRule" id="PRU00532"/>
    </source>
</evidence>
<evidence type="ECO:0000256" key="4">
    <source>
        <dbReference type="SAM" id="MobiDB-lite"/>
    </source>
</evidence>
<evidence type="ECO:0000305" key="5"/>
<protein>
    <recommendedName>
        <fullName>Amino-acid acetyltransferase, mitochondrial</fullName>
        <ecNumber>2.3.1.1</ecNumber>
    </recommendedName>
    <alternativeName>
        <fullName>Arginine-requiring protein 2</fullName>
    </alternativeName>
    <alternativeName>
        <fullName>Glutamate N-acetyltransferase</fullName>
    </alternativeName>
    <alternativeName>
        <fullName>N-acetylglutamate synthase</fullName>
        <shortName>AGS</shortName>
        <shortName>NAGS</shortName>
    </alternativeName>
</protein>
<comment type="function">
    <text evidence="1">N-acetylglutamate synthase involved in arginine biosynthesis.</text>
</comment>
<comment type="catalytic activity">
    <reaction>
        <text>L-glutamate + acetyl-CoA = N-acetyl-L-glutamate + CoA + H(+)</text>
        <dbReference type="Rhea" id="RHEA:24292"/>
        <dbReference type="ChEBI" id="CHEBI:15378"/>
        <dbReference type="ChEBI" id="CHEBI:29985"/>
        <dbReference type="ChEBI" id="CHEBI:44337"/>
        <dbReference type="ChEBI" id="CHEBI:57287"/>
        <dbReference type="ChEBI" id="CHEBI:57288"/>
        <dbReference type="EC" id="2.3.1.1"/>
    </reaction>
</comment>
<comment type="pathway">
    <text>Amino-acid biosynthesis; L-arginine biosynthesis; N(2)-acetyl-L-ornithine from L-glutamate: step 1/4.</text>
</comment>
<comment type="subcellular location">
    <subcellularLocation>
        <location evidence="1">Mitochondrion</location>
    </subcellularLocation>
</comment>
<comment type="similarity">
    <text evidence="5">Belongs to the acetyltransferase family.</text>
</comment>
<sequence>MSSTSLAWPRTAKSSLLQSADFSSTSKGYDRLGRRAREKLLDREFFLSLLNSASTKREAKSYLARLKAQHSPKPQVKEPEKESKDDAPQPLPSGVNLGSFYGASRSVYDSPVFRHDSTPTPHREISEERLHLSLVKLTTPQLLDDYIIDGVAKTLSQLNRLGMASCVVVDPGAGDHPNALRKIAAEQADRLSNAIDALPDSKSAHLDSVLSLSSTDPDTPTVMSRKALLSPMRDGHIVVVAPIAYTDDVRAVVVPADNAVLALTKELAGLATRPDPDEDPWVTAQRIGDLQREVSLDRVILLDPLGGIPAFSGPQTSHVFINMEQEFDDIEQELLRVRESAASSNQPSASSLLDGDASSIADSNPISKFVNHDVVPVPPEQEAVLPGLRLEERAVDGHLENLSLSQKVLAMLPSASSGIITSPLEVANSAMAPQTTPSGLAVGTRRQRNPLIHNLLTDKPLLSSSLPLSRRAAINGRRGSLTAPSSHTTFVKRGMPLTLVPNPRVQTWTAQNRPRMSLDDPSIDLPRLVHLIEDSFNRKLDVQDYLNRIHDRLAGLIIAGEYEGGAILTWELPPGVEDDGSPASEARMVPYLDKFAVLKRSQGAGGVADIVFNAMVRSCFPNGVCWRSRKDNPVNKWYFERSEGTWKLADTNWTMFWTTPNLPDDLQRFQDYEAVCRSIQPSWADDTGVVD</sequence>
<keyword id="KW-0012">Acyltransferase</keyword>
<keyword id="KW-0028">Amino-acid biosynthesis</keyword>
<keyword id="KW-0496">Mitochondrion</keyword>
<keyword id="KW-1185">Reference proteome</keyword>
<keyword id="KW-0808">Transferase</keyword>
<keyword id="KW-0809">Transit peptide</keyword>